<organism>
    <name type="scientific">Caenorhabditis elegans</name>
    <dbReference type="NCBI Taxonomy" id="6239"/>
    <lineage>
        <taxon>Eukaryota</taxon>
        <taxon>Metazoa</taxon>
        <taxon>Ecdysozoa</taxon>
        <taxon>Nematoda</taxon>
        <taxon>Chromadorea</taxon>
        <taxon>Rhabditida</taxon>
        <taxon>Rhabditina</taxon>
        <taxon>Rhabditomorpha</taxon>
        <taxon>Rhabditoidea</taxon>
        <taxon>Rhabditidae</taxon>
        <taxon>Peloderinae</taxon>
        <taxon>Caenorhabditis</taxon>
    </lineage>
</organism>
<sequence>MIRQIILIVSLIGISNAAYQCKDNNGSNVDWFVFYKLPHLWNHPDNVPISNGTGFLYFDVNNKNWKLMPQGMDVENNAVYYTLQQYYNSNMNTTFSYMYNDEWPDSTIWSNSSGHAKGVTVFDQYTGFWMIHSIPKFPSKDMFRFPSNAHYYGQMGICISYNTVSLATIAQQLFYYNTFTYQFNLPQSFANQFPVLSQLKNKEYNKSPPLTSTKVLKSLGGQHFRHFAKTGEWGKDLYSDFVGPTLKSSIKVETWNHQSGDEYNLPSVCDPNHVQSTMSAKYIRLPYAIDYSSYEDHSKFVVAYSESSSKPPIPYVCIGDINRQSHQIHRGGGTMCIYDQETYFQFANIISETVPCTKATAEKATLTVLLIAIITFFK</sequence>
<feature type="signal peptide" evidence="1">
    <location>
        <begin position="1"/>
        <end position="17"/>
    </location>
</feature>
<feature type="chain" id="PRO_0000007298" description="Cell death-related nuclease 6">
    <location>
        <begin position="18"/>
        <end position="378"/>
    </location>
</feature>
<feature type="glycosylation site" description="N-linked (GlcNAc...) asparagine" evidence="1">
    <location>
        <position position="51"/>
    </location>
</feature>
<feature type="glycosylation site" description="N-linked (GlcNAc...) asparagine" evidence="1">
    <location>
        <position position="92"/>
    </location>
</feature>
<feature type="glycosylation site" description="N-linked (GlcNAc...) asparagine" evidence="1">
    <location>
        <position position="111"/>
    </location>
</feature>
<feature type="splice variant" id="VSP_001304" description="In isoform a." evidence="3 4">
    <original>ATLTVLLIAIITFFK</original>
    <variation>VDALANNRYF</variation>
    <location>
        <begin position="364"/>
        <end position="378"/>
    </location>
</feature>
<feature type="sequence conflict" description="In Ref. 4; AAF43008." evidence="5" ref="4">
    <original>L</original>
    <variation>F</variation>
    <location>
        <position position="40"/>
    </location>
</feature>
<feature type="sequence conflict" description="In Ref. 4; AAF43008." evidence="5" ref="4">
    <original>S</original>
    <variation>P</variation>
    <location>
        <position position="267"/>
    </location>
</feature>
<accession>P34508</accession>
<accession>Q9NAQ0</accession>
<accession>Q9NCF8</accession>
<proteinExistence type="evidence at transcript level"/>
<keyword id="KW-0025">Alternative splicing</keyword>
<keyword id="KW-0053">Apoptosis</keyword>
<keyword id="KW-0325">Glycoprotein</keyword>
<keyword id="KW-0378">Hydrolase</keyword>
<keyword id="KW-0540">Nuclease</keyword>
<keyword id="KW-1185">Reference proteome</keyword>
<keyword id="KW-0732">Signal</keyword>
<reference key="1">
    <citation type="journal article" date="2003" name="Mol. Cell">
        <title>Functional genomic analysis of apoptotic DNA degradation in C. elegans.</title>
        <authorList>
            <person name="Parrish J.Z."/>
            <person name="Xue D."/>
        </authorList>
    </citation>
    <scope>NUCLEOTIDE SEQUENCE [MRNA] (ISOFORM A)</scope>
    <scope>FUNCTION</scope>
    <scope>DISRUPTION PHENOTYPE</scope>
</reference>
<reference key="2">
    <citation type="journal article" date="1994" name="Nature">
        <title>2.2 Mb of contiguous nucleotide sequence from chromosome III of C. elegans.</title>
        <authorList>
            <person name="Wilson R."/>
            <person name="Ainscough R."/>
            <person name="Anderson K."/>
            <person name="Baynes C."/>
            <person name="Berks M."/>
            <person name="Bonfield J."/>
            <person name="Burton J."/>
            <person name="Connell M."/>
            <person name="Copsey T."/>
            <person name="Cooper J."/>
            <person name="Coulson A."/>
            <person name="Craxton M."/>
            <person name="Dear S."/>
            <person name="Du Z."/>
            <person name="Durbin R."/>
            <person name="Favello A."/>
            <person name="Fraser A."/>
            <person name="Fulton L."/>
            <person name="Gardner A."/>
            <person name="Green P."/>
            <person name="Hawkins T."/>
            <person name="Hillier L."/>
            <person name="Jier M."/>
            <person name="Johnston L."/>
            <person name="Jones M."/>
            <person name="Kershaw J."/>
            <person name="Kirsten J."/>
            <person name="Laisster N."/>
            <person name="Latreille P."/>
            <person name="Lightning J."/>
            <person name="Lloyd C."/>
            <person name="Mortimore B."/>
            <person name="O'Callaghan M."/>
            <person name="Parsons J."/>
            <person name="Percy C."/>
            <person name="Rifken L."/>
            <person name="Roopra A."/>
            <person name="Saunders D."/>
            <person name="Shownkeen R."/>
            <person name="Sims M."/>
            <person name="Smaldon N."/>
            <person name="Smith A."/>
            <person name="Smith M."/>
            <person name="Sonnhammer E."/>
            <person name="Staden R."/>
            <person name="Sulston J."/>
            <person name="Thierry-Mieg J."/>
            <person name="Thomas K."/>
            <person name="Vaudin M."/>
            <person name="Vaughan K."/>
            <person name="Waterston R."/>
            <person name="Watson A."/>
            <person name="Weinstock L."/>
            <person name="Wilkinson-Sproat J."/>
            <person name="Wohldman P."/>
        </authorList>
    </citation>
    <scope>NUCLEOTIDE SEQUENCE [LARGE SCALE GENOMIC DNA]</scope>
    <source>
        <strain>Bristol N2</strain>
    </source>
</reference>
<reference key="3">
    <citation type="journal article" date="1998" name="Science">
        <title>Genome sequence of the nematode C. elegans: a platform for investigating biology.</title>
        <authorList>
            <consortium name="The C. elegans sequencing consortium"/>
        </authorList>
    </citation>
    <scope>NUCLEOTIDE SEQUENCE [LARGE SCALE GENOMIC DNA]</scope>
    <scope>ALTERNATIVE SPLICING</scope>
    <source>
        <strain>Bristol N2</strain>
    </source>
</reference>
<reference key="4">
    <citation type="journal article" date="2000" name="Gene">
        <title>Deoxyribonuclease II: structure and chromosomal localization of the murine gene, and comparison with the genomic structure of the human and three C. elegans homologs.</title>
        <authorList>
            <person name="Krieser R.J."/>
            <person name="Eastman A."/>
        </authorList>
    </citation>
    <scope>NUCLEOTIDE SEQUENCE [MRNA] OF 18-369 (ISOFORM A)</scope>
</reference>
<gene>
    <name type="primary">crn-6</name>
    <name type="ORF">K04H4.6</name>
</gene>
<evidence type="ECO:0000255" key="1"/>
<evidence type="ECO:0000269" key="2">
    <source>
    </source>
</evidence>
<evidence type="ECO:0000303" key="3">
    <source>
    </source>
</evidence>
<evidence type="ECO:0000303" key="4">
    <source>
    </source>
</evidence>
<evidence type="ECO:0000305" key="5"/>
<comment type="function">
    <text evidence="2">Involved in apoptotic DNA degradation.</text>
</comment>
<comment type="alternative products">
    <event type="alternative splicing"/>
    <isoform>
        <id>P34508-1</id>
        <name>b</name>
        <sequence type="displayed"/>
    </isoform>
    <isoform>
        <id>P34508-2</id>
        <name>a</name>
        <sequence type="described" ref="VSP_001304"/>
    </isoform>
</comment>
<comment type="disruption phenotype">
    <text evidence="2">RNAi-mediated knockdown results in accumulation of apoptotic DNA in 1.5-fold stage embryos.</text>
</comment>
<comment type="similarity">
    <text evidence="5">Belongs to the DNase II family.</text>
</comment>
<protein>
    <recommendedName>
        <fullName>Cell death-related nuclease 6</fullName>
        <ecNumber>3.1.-.-</ecNumber>
    </recommendedName>
</protein>
<name>CRN6_CAEEL</name>
<dbReference type="EC" id="3.1.-.-"/>
<dbReference type="EMBL" id="AY303580">
    <property type="protein sequence ID" value="AAP57302.1"/>
    <property type="molecule type" value="mRNA"/>
</dbReference>
<dbReference type="EMBL" id="Z27078">
    <property type="protein sequence ID" value="CAA81586.2"/>
    <property type="molecule type" value="Genomic_DNA"/>
</dbReference>
<dbReference type="EMBL" id="Z19153">
    <property type="protein sequence ID" value="CAA81586.2"/>
    <property type="status" value="JOINED"/>
    <property type="molecule type" value="Genomic_DNA"/>
</dbReference>
<dbReference type="EMBL" id="Z27078">
    <property type="protein sequence ID" value="CAB76843.1"/>
    <property type="molecule type" value="Genomic_DNA"/>
</dbReference>
<dbReference type="EMBL" id="AF220525">
    <property type="protein sequence ID" value="AAF43008.1"/>
    <property type="molecule type" value="mRNA"/>
</dbReference>
<dbReference type="PIR" id="S40996">
    <property type="entry name" value="S40996"/>
</dbReference>
<dbReference type="RefSeq" id="NP_001370104.1">
    <molecule id="P34508-2"/>
    <property type="nucleotide sequence ID" value="NM_001382961.2"/>
</dbReference>
<dbReference type="RefSeq" id="NP_499061.2">
    <molecule id="P34508-1"/>
    <property type="nucleotide sequence ID" value="NM_066660.4"/>
</dbReference>
<dbReference type="RefSeq" id="NP_499062.1">
    <property type="nucleotide sequence ID" value="NM_066661.1"/>
</dbReference>
<dbReference type="SMR" id="P34508"/>
<dbReference type="BioGRID" id="41514">
    <property type="interactions" value="3"/>
</dbReference>
<dbReference type="FunCoup" id="P34508">
    <property type="interactions" value="205"/>
</dbReference>
<dbReference type="STRING" id="6239.K04H4.6b.1"/>
<dbReference type="GlyCosmos" id="P34508">
    <property type="glycosylation" value="3 sites, No reported glycans"/>
</dbReference>
<dbReference type="PaxDb" id="6239-K04H4.6b.2"/>
<dbReference type="PeptideAtlas" id="P34508"/>
<dbReference type="EnsemblMetazoa" id="K04H4.6a.1">
    <molecule id="P34508-2"/>
    <property type="protein sequence ID" value="K04H4.6a.1"/>
    <property type="gene ID" value="WBGene00000799"/>
</dbReference>
<dbReference type="EnsemblMetazoa" id="K04H4.6b.1">
    <molecule id="P34508-1"/>
    <property type="protein sequence ID" value="K04H4.6b.1"/>
    <property type="gene ID" value="WBGene00000799"/>
</dbReference>
<dbReference type="GeneID" id="176316"/>
<dbReference type="KEGG" id="cel:CELE_K04H4.6"/>
<dbReference type="UCSC" id="K04H4.6b">
    <molecule id="P34508-1"/>
    <property type="organism name" value="c. elegans"/>
</dbReference>
<dbReference type="AGR" id="WB:WBGene00000799"/>
<dbReference type="CTD" id="176316"/>
<dbReference type="WormBase" id="K04H4.6a">
    <molecule id="P34508-2"/>
    <property type="protein sequence ID" value="CE25043"/>
    <property type="gene ID" value="WBGene00000799"/>
    <property type="gene designation" value="crn-6"/>
</dbReference>
<dbReference type="WormBase" id="K04H4.6b">
    <molecule id="P34508-1"/>
    <property type="protein sequence ID" value="CE31813"/>
    <property type="gene ID" value="WBGene00000799"/>
    <property type="gene designation" value="crn-6"/>
</dbReference>
<dbReference type="eggNOG" id="KOG3825">
    <property type="taxonomic scope" value="Eukaryota"/>
</dbReference>
<dbReference type="GeneTree" id="ENSGT00390000002634"/>
<dbReference type="InParanoid" id="P34508"/>
<dbReference type="OMA" id="WPDSTIW"/>
<dbReference type="OrthoDB" id="10261598at2759"/>
<dbReference type="PhylomeDB" id="P34508"/>
<dbReference type="BRENDA" id="3.1.22.1">
    <property type="organism ID" value="1045"/>
</dbReference>
<dbReference type="PRO" id="PR:P34508"/>
<dbReference type="Proteomes" id="UP000001940">
    <property type="component" value="Chromosome III"/>
</dbReference>
<dbReference type="Bgee" id="WBGene00000799">
    <property type="expression patterns" value="Expressed in embryo and 4 other cell types or tissues"/>
</dbReference>
<dbReference type="GO" id="GO:0004531">
    <property type="term" value="F:deoxyribonuclease II activity"/>
    <property type="evidence" value="ECO:0000315"/>
    <property type="project" value="WormBase"/>
</dbReference>
<dbReference type="GO" id="GO:0006309">
    <property type="term" value="P:apoptotic DNA fragmentation"/>
    <property type="evidence" value="ECO:0000315"/>
    <property type="project" value="WormBase"/>
</dbReference>
<dbReference type="CDD" id="cd09120">
    <property type="entry name" value="PLDc_DNaseII_1"/>
    <property type="match status" value="1"/>
</dbReference>
<dbReference type="CDD" id="cd09121">
    <property type="entry name" value="PLDc_DNaseII_2"/>
    <property type="match status" value="1"/>
</dbReference>
<dbReference type="InterPro" id="IPR004947">
    <property type="entry name" value="DNase_II"/>
</dbReference>
<dbReference type="PANTHER" id="PTHR10858:SF24">
    <property type="entry name" value="CELL DEATH-RELATED NUCLEASE 6"/>
    <property type="match status" value="1"/>
</dbReference>
<dbReference type="PANTHER" id="PTHR10858">
    <property type="entry name" value="DEOXYRIBONUCLEASE II"/>
    <property type="match status" value="1"/>
</dbReference>
<dbReference type="Pfam" id="PF03265">
    <property type="entry name" value="DNase_II"/>
    <property type="match status" value="1"/>
</dbReference>